<keyword id="KW-1185">Reference proteome</keyword>
<keyword id="KW-0687">Ribonucleoprotein</keyword>
<keyword id="KW-0689">Ribosomal protein</keyword>
<organism>
    <name type="scientific">Mycobacterium leprae (strain TN)</name>
    <dbReference type="NCBI Taxonomy" id="272631"/>
    <lineage>
        <taxon>Bacteria</taxon>
        <taxon>Bacillati</taxon>
        <taxon>Actinomycetota</taxon>
        <taxon>Actinomycetes</taxon>
        <taxon>Mycobacteriales</taxon>
        <taxon>Mycobacteriaceae</taxon>
        <taxon>Mycobacterium</taxon>
    </lineage>
</organism>
<protein>
    <recommendedName>
        <fullName evidence="2">Small ribosomal subunit protein uS9</fullName>
    </recommendedName>
    <alternativeName>
        <fullName>30S ribosomal protein S9</fullName>
    </alternativeName>
</protein>
<gene>
    <name type="primary">rpsI</name>
    <name type="ordered locus">ML0365</name>
    <name type="ORF">B229_C2_191</name>
</gene>
<sequence>MTETSEAVEIAVGTPAAKHSESFVFERSIQTVGRRKEAVVRVRLVLGTGKFDLNGRSLEDYFPNKVHQQLIKAPLVTVERTRNFDIFALLHGGGPSGQAGALRLGIARALILASPEDRPALKKAGFLTRDPRSTERKKYGLKKARKAPQYSKR</sequence>
<name>RS9_MYCLE</name>
<accession>P40828</accession>
<comment type="similarity">
    <text evidence="2">Belongs to the universal ribosomal protein uS9 family.</text>
</comment>
<evidence type="ECO:0000256" key="1">
    <source>
        <dbReference type="SAM" id="MobiDB-lite"/>
    </source>
</evidence>
<evidence type="ECO:0000305" key="2"/>
<reference key="1">
    <citation type="submission" date="1994-03" db="EMBL/GenBank/DDBJ databases">
        <authorList>
            <person name="Smith D.R."/>
            <person name="Robison K."/>
        </authorList>
    </citation>
    <scope>NUCLEOTIDE SEQUENCE [GENOMIC DNA]</scope>
</reference>
<reference key="2">
    <citation type="journal article" date="2001" name="Nature">
        <title>Massive gene decay in the leprosy bacillus.</title>
        <authorList>
            <person name="Cole S.T."/>
            <person name="Eiglmeier K."/>
            <person name="Parkhill J."/>
            <person name="James K.D."/>
            <person name="Thomson N.R."/>
            <person name="Wheeler P.R."/>
            <person name="Honore N."/>
            <person name="Garnier T."/>
            <person name="Churcher C.M."/>
            <person name="Harris D.E."/>
            <person name="Mungall K.L."/>
            <person name="Basham D."/>
            <person name="Brown D."/>
            <person name="Chillingworth T."/>
            <person name="Connor R."/>
            <person name="Davies R.M."/>
            <person name="Devlin K."/>
            <person name="Duthoy S."/>
            <person name="Feltwell T."/>
            <person name="Fraser A."/>
            <person name="Hamlin N."/>
            <person name="Holroyd S."/>
            <person name="Hornsby T."/>
            <person name="Jagels K."/>
            <person name="Lacroix C."/>
            <person name="Maclean J."/>
            <person name="Moule S."/>
            <person name="Murphy L.D."/>
            <person name="Oliver K."/>
            <person name="Quail M.A."/>
            <person name="Rajandream M.A."/>
            <person name="Rutherford K.M."/>
            <person name="Rutter S."/>
            <person name="Seeger K."/>
            <person name="Simon S."/>
            <person name="Simmonds M."/>
            <person name="Skelton J."/>
            <person name="Squares R."/>
            <person name="Squares S."/>
            <person name="Stevens K."/>
            <person name="Taylor K."/>
            <person name="Whitehead S."/>
            <person name="Woodward J.R."/>
            <person name="Barrell B.G."/>
        </authorList>
    </citation>
    <scope>NUCLEOTIDE SEQUENCE [LARGE SCALE GENOMIC DNA]</scope>
    <source>
        <strain>TN</strain>
    </source>
</reference>
<dbReference type="EMBL" id="U00020">
    <property type="protein sequence ID" value="AAA17296.1"/>
    <property type="molecule type" value="Genomic_DNA"/>
</dbReference>
<dbReference type="EMBL" id="AL583918">
    <property type="protein sequence ID" value="CAC29873.1"/>
    <property type="molecule type" value="Genomic_DNA"/>
</dbReference>
<dbReference type="PIR" id="S72982">
    <property type="entry name" value="S72982"/>
</dbReference>
<dbReference type="RefSeq" id="NP_301361.1">
    <property type="nucleotide sequence ID" value="NC_002677.1"/>
</dbReference>
<dbReference type="RefSeq" id="WP_010907685.1">
    <property type="nucleotide sequence ID" value="NC_002677.1"/>
</dbReference>
<dbReference type="SMR" id="P40828"/>
<dbReference type="STRING" id="272631.gene:17574184"/>
<dbReference type="KEGG" id="mle:ML0365"/>
<dbReference type="PATRIC" id="fig|272631.5.peg.617"/>
<dbReference type="Leproma" id="ML0365"/>
<dbReference type="eggNOG" id="COG0103">
    <property type="taxonomic scope" value="Bacteria"/>
</dbReference>
<dbReference type="HOGENOM" id="CLU_046483_2_0_11"/>
<dbReference type="OrthoDB" id="9803965at2"/>
<dbReference type="Proteomes" id="UP000000806">
    <property type="component" value="Chromosome"/>
</dbReference>
<dbReference type="GO" id="GO:0005737">
    <property type="term" value="C:cytoplasm"/>
    <property type="evidence" value="ECO:0007669"/>
    <property type="project" value="UniProtKB-ARBA"/>
</dbReference>
<dbReference type="GO" id="GO:0015935">
    <property type="term" value="C:small ribosomal subunit"/>
    <property type="evidence" value="ECO:0007669"/>
    <property type="project" value="TreeGrafter"/>
</dbReference>
<dbReference type="GO" id="GO:0003723">
    <property type="term" value="F:RNA binding"/>
    <property type="evidence" value="ECO:0007669"/>
    <property type="project" value="TreeGrafter"/>
</dbReference>
<dbReference type="GO" id="GO:0003735">
    <property type="term" value="F:structural constituent of ribosome"/>
    <property type="evidence" value="ECO:0007669"/>
    <property type="project" value="InterPro"/>
</dbReference>
<dbReference type="GO" id="GO:0006412">
    <property type="term" value="P:translation"/>
    <property type="evidence" value="ECO:0007669"/>
    <property type="project" value="UniProtKB-UniRule"/>
</dbReference>
<dbReference type="FunFam" id="3.30.230.10:FF:000001">
    <property type="entry name" value="30S ribosomal protein S9"/>
    <property type="match status" value="1"/>
</dbReference>
<dbReference type="Gene3D" id="3.30.230.10">
    <property type="match status" value="1"/>
</dbReference>
<dbReference type="HAMAP" id="MF_00532_B">
    <property type="entry name" value="Ribosomal_uS9_B"/>
    <property type="match status" value="1"/>
</dbReference>
<dbReference type="InterPro" id="IPR020568">
    <property type="entry name" value="Ribosomal_Su5_D2-typ_SF"/>
</dbReference>
<dbReference type="InterPro" id="IPR000754">
    <property type="entry name" value="Ribosomal_uS9"/>
</dbReference>
<dbReference type="InterPro" id="IPR023035">
    <property type="entry name" value="Ribosomal_uS9_bac/plastid"/>
</dbReference>
<dbReference type="InterPro" id="IPR020574">
    <property type="entry name" value="Ribosomal_uS9_CS"/>
</dbReference>
<dbReference type="InterPro" id="IPR014721">
    <property type="entry name" value="Ribsml_uS5_D2-typ_fold_subgr"/>
</dbReference>
<dbReference type="NCBIfam" id="NF001099">
    <property type="entry name" value="PRK00132.1"/>
    <property type="match status" value="1"/>
</dbReference>
<dbReference type="PANTHER" id="PTHR21569">
    <property type="entry name" value="RIBOSOMAL PROTEIN S9"/>
    <property type="match status" value="1"/>
</dbReference>
<dbReference type="PANTHER" id="PTHR21569:SF1">
    <property type="entry name" value="SMALL RIBOSOMAL SUBUNIT PROTEIN US9M"/>
    <property type="match status" value="1"/>
</dbReference>
<dbReference type="Pfam" id="PF00380">
    <property type="entry name" value="Ribosomal_S9"/>
    <property type="match status" value="1"/>
</dbReference>
<dbReference type="SUPFAM" id="SSF54211">
    <property type="entry name" value="Ribosomal protein S5 domain 2-like"/>
    <property type="match status" value="1"/>
</dbReference>
<dbReference type="PROSITE" id="PS00360">
    <property type="entry name" value="RIBOSOMAL_S9"/>
    <property type="match status" value="1"/>
</dbReference>
<proteinExistence type="inferred from homology"/>
<feature type="chain" id="PRO_0000111374" description="Small ribosomal subunit protein uS9">
    <location>
        <begin position="1"/>
        <end position="153"/>
    </location>
</feature>
<feature type="region of interest" description="Disordered" evidence="1">
    <location>
        <begin position="122"/>
        <end position="153"/>
    </location>
</feature>
<feature type="compositionally biased region" description="Basic and acidic residues" evidence="1">
    <location>
        <begin position="129"/>
        <end position="138"/>
    </location>
</feature>
<feature type="compositionally biased region" description="Basic residues" evidence="1">
    <location>
        <begin position="139"/>
        <end position="153"/>
    </location>
</feature>